<organism>
    <name type="scientific">Candida albicans (strain SC5314 / ATCC MYA-2876)</name>
    <name type="common">Yeast</name>
    <dbReference type="NCBI Taxonomy" id="237561"/>
    <lineage>
        <taxon>Eukaryota</taxon>
        <taxon>Fungi</taxon>
        <taxon>Dikarya</taxon>
        <taxon>Ascomycota</taxon>
        <taxon>Saccharomycotina</taxon>
        <taxon>Pichiomycetes</taxon>
        <taxon>Debaryomycetaceae</taxon>
        <taxon>Candida/Lodderomyces clade</taxon>
        <taxon>Candida</taxon>
    </lineage>
</organism>
<comment type="function">
    <text evidence="12 13 15">GPI-anchored hyphal cell wall protein required for hyphal growth and virulence. Involved in innate immune cell evasion through conferring resistance to neutrophil killing. Binds kininogen, the proteinaceous kinin precursor, and contributes to trigger the kinin-forming cascade on the cell surface. Production of kinins is often involved in the human host defense against microbial infections.</text>
</comment>
<comment type="subunit">
    <text evidence="10 11">Component of a multiprotein complex of 250 kDa composed of at least HYR1, MP65, and PRA1.</text>
</comment>
<comment type="subcellular location">
    <subcellularLocation>
        <location evidence="10 16">Secreted</location>
        <location evidence="10 16">Cell wall</location>
    </subcellularLocation>
    <subcellularLocation>
        <location evidence="19">Membrane</location>
        <topology evidence="19">Lipid-anchor</topology>
        <topology evidence="19">GPI-anchor</topology>
    </subcellularLocation>
</comment>
<comment type="induction">
    <text evidence="4 5 6 7 8 9 12 14 17 18">Induced specifically in response to hyphal growth. Expression is repressed by neutrophils and purpurin. Regulated by RFG1, EFG1, NRG1, TUP1, CYR1, BCR1, and HAP43.</text>
</comment>
<comment type="PTM">
    <text>The GPI-anchor is attached to the protein in the endoplasmic reticulum and serves to target the protein to the cell surface. There, the glucosamine-inositol phospholipid moiety is cleaved off and the GPI-modified mannoprotein is covalently attached via its lipidless GPI glycan remnant to the 1,6-beta-glucan of the outer cell wall layer.</text>
</comment>
<comment type="disruption phenotype">
    <text evidence="13">Leads to attenuated virulence in a mouse oral biofilm model of infection.</text>
</comment>
<comment type="similarity">
    <text evidence="19">Belongs to the HYR1/IFF family.</text>
</comment>
<evidence type="ECO:0000255" key="1"/>
<evidence type="ECO:0000255" key="2">
    <source>
        <dbReference type="PROSITE-ProRule" id="PRU00498"/>
    </source>
</evidence>
<evidence type="ECO:0000256" key="3">
    <source>
        <dbReference type="SAM" id="MobiDB-lite"/>
    </source>
</evidence>
<evidence type="ECO:0000269" key="4">
    <source>
    </source>
</evidence>
<evidence type="ECO:0000269" key="5">
    <source>
    </source>
</evidence>
<evidence type="ECO:0000269" key="6">
    <source>
    </source>
</evidence>
<evidence type="ECO:0000269" key="7">
    <source>
    </source>
</evidence>
<evidence type="ECO:0000269" key="8">
    <source>
    </source>
</evidence>
<evidence type="ECO:0000269" key="9">
    <source>
    </source>
</evidence>
<evidence type="ECO:0000269" key="10">
    <source>
    </source>
</evidence>
<evidence type="ECO:0000269" key="11">
    <source>
    </source>
</evidence>
<evidence type="ECO:0000269" key="12">
    <source>
    </source>
</evidence>
<evidence type="ECO:0000269" key="13">
    <source>
    </source>
</evidence>
<evidence type="ECO:0000269" key="14">
    <source>
    </source>
</evidence>
<evidence type="ECO:0000269" key="15">
    <source>
    </source>
</evidence>
<evidence type="ECO:0000269" key="16">
    <source>
    </source>
</evidence>
<evidence type="ECO:0000269" key="17">
    <source>
    </source>
</evidence>
<evidence type="ECO:0000269" key="18">
    <source>
    </source>
</evidence>
<evidence type="ECO:0000305" key="19"/>
<proteinExistence type="evidence at protein level"/>
<reference key="1">
    <citation type="journal article" date="2004" name="Proc. Natl. Acad. Sci. U.S.A.">
        <title>The diploid genome sequence of Candida albicans.</title>
        <authorList>
            <person name="Jones T."/>
            <person name="Federspiel N.A."/>
            <person name="Chibana H."/>
            <person name="Dungan J."/>
            <person name="Kalman S."/>
            <person name="Magee B.B."/>
            <person name="Newport G."/>
            <person name="Thorstenson Y.R."/>
            <person name="Agabian N."/>
            <person name="Magee P.T."/>
            <person name="Davis R.W."/>
            <person name="Scherer S."/>
        </authorList>
    </citation>
    <scope>NUCLEOTIDE SEQUENCE [LARGE SCALE GENOMIC DNA]</scope>
    <source>
        <strain>SC5314 / ATCC MYA-2876</strain>
    </source>
</reference>
<reference key="2">
    <citation type="journal article" date="2007" name="Genome Biol.">
        <title>Assembly of the Candida albicans genome into sixteen supercontigs aligned on the eight chromosomes.</title>
        <authorList>
            <person name="van het Hoog M."/>
            <person name="Rast T.J."/>
            <person name="Martchenko M."/>
            <person name="Grindle S."/>
            <person name="Dignard D."/>
            <person name="Hogues H."/>
            <person name="Cuomo C."/>
            <person name="Berriman M."/>
            <person name="Scherer S."/>
            <person name="Magee B.B."/>
            <person name="Whiteway M."/>
            <person name="Chibana H."/>
            <person name="Nantel A."/>
            <person name="Magee P.T."/>
        </authorList>
    </citation>
    <scope>GENOME REANNOTATION</scope>
    <source>
        <strain>SC5314 / ATCC MYA-2876</strain>
    </source>
</reference>
<reference key="3">
    <citation type="journal article" date="2013" name="Genome Biol.">
        <title>Assembly of a phased diploid Candida albicans genome facilitates allele-specific measurements and provides a simple model for repeat and indel structure.</title>
        <authorList>
            <person name="Muzzey D."/>
            <person name="Schwartz K."/>
            <person name="Weissman J.S."/>
            <person name="Sherlock G."/>
        </authorList>
    </citation>
    <scope>NUCLEOTIDE SEQUENCE [LARGE SCALE GENOMIC DNA]</scope>
    <scope>GENOME REANNOTATION</scope>
    <source>
        <strain>SC5314 / ATCC MYA-2876</strain>
    </source>
</reference>
<reference key="4">
    <citation type="journal article" date="1996" name="J. Bacteriol.">
        <title>The Candida albicans HYR1 gene, which is activated in response to hyphal development, belongs to a gene family encoding yeast cell wall proteins.</title>
        <authorList>
            <person name="Bailey D.A."/>
            <person name="Feldmann P.J.F."/>
            <person name="Bovey M."/>
            <person name="Gow N.A.R."/>
            <person name="Brown A.J.P."/>
        </authorList>
    </citation>
    <scope>IDENTIFICATION</scope>
    <scope>INDUCTION</scope>
</reference>
<reference key="5">
    <citation type="journal article" date="2001" name="EMBO J.">
        <title>NRG1 represses yeast-hypha morphogenesis and hypha-specific gene expression in Candida albicans.</title>
        <authorList>
            <person name="Murad A.M."/>
            <person name="Leng P."/>
            <person name="Straffon M."/>
            <person name="Wishart J."/>
            <person name="Macaskill S."/>
            <person name="MacCallum D."/>
            <person name="Schnell N."/>
            <person name="Talibi D."/>
            <person name="Marechal D."/>
            <person name="Tekaia F."/>
            <person name="d'Enfert C."/>
            <person name="Gaillardin C."/>
            <person name="Odds F.C."/>
            <person name="Brown A.J."/>
        </authorList>
    </citation>
    <scope>INDUCTION</scope>
</reference>
<reference key="6">
    <citation type="journal article" date="2001" name="J. Bacteriol.">
        <title>Efg1, a morphogenetic regulator in Candida albicans, is a sequence-specific DNA binding protein.</title>
        <authorList>
            <person name="Leng P."/>
            <person name="Lee P.R."/>
            <person name="Wu H."/>
            <person name="Brown A.J."/>
        </authorList>
    </citation>
    <scope>INDUCTION</scope>
</reference>
<reference key="7">
    <citation type="journal article" date="2001" name="Mol. Cell. Biol.">
        <title>Rfg1, a protein related to the Saccharomyces cerevisiae hypoxic regulator Rox1, controls filamentous growth and virulence in Candida albicans.</title>
        <authorList>
            <person name="Kadosh D."/>
            <person name="Johnson A.D."/>
        </authorList>
    </citation>
    <scope>INDUCTION</scope>
</reference>
<reference key="8">
    <citation type="journal article" date="2002" name="Eukaryot. Cell">
        <title>Hyphal tip-associated localization of Cdc42 is F-actin dependent in Candida albicans.</title>
        <authorList>
            <person name="Hazan I."/>
            <person name="Liu H."/>
        </authorList>
    </citation>
    <scope>INDUCTION</scope>
</reference>
<reference key="9">
    <citation type="journal article" date="2003" name="Mol. Microbiol.">
        <title>EFG1 is a major regulator of cell wall dynamics in Candida albicans as revealed by DNA microarrays.</title>
        <authorList>
            <person name="Sohn K."/>
            <person name="Urban C."/>
            <person name="Brunner H."/>
            <person name="Rupp S."/>
        </authorList>
    </citation>
    <scope>INDUCTION</scope>
</reference>
<reference key="10">
    <citation type="journal article" date="2003" name="Yeast">
        <title>Genome-wide identification of fungal GPI proteins.</title>
        <authorList>
            <person name="De Groot P.W."/>
            <person name="Hellingwerf K.J."/>
            <person name="Klis F.M."/>
        </authorList>
    </citation>
    <scope>PREDICTION OF GPI-ANCHOR</scope>
</reference>
<reference key="11">
    <citation type="journal article" date="2006" name="PLoS Pathog.">
        <title>Critical role of Bcr1-dependent adhesins in C. albicans biofilm formation in vitro and in vivo.</title>
        <authorList>
            <person name="Nobile C.J."/>
            <person name="Andes D.R."/>
            <person name="Nett J.E."/>
            <person name="Smith F.J."/>
            <person name="Yue F."/>
            <person name="Phan Q.T."/>
            <person name="Edwards J.E."/>
            <person name="Filler S.G."/>
            <person name="Mitchell A.P."/>
        </authorList>
    </citation>
    <scope>INDUCTION</scope>
</reference>
<reference key="12">
    <citation type="journal article" date="2007" name="Infect. Immun.">
        <title>Candida albicans Iff11, a secreted protein required for cell wall structure and virulence.</title>
        <authorList>
            <person name="Bates S."/>
            <person name="de la Rosa J.M."/>
            <person name="MacCallum D.M."/>
            <person name="Brown A.J."/>
            <person name="Gow N.A."/>
            <person name="Odds F.C."/>
        </authorList>
    </citation>
    <scope>IDENTIFICATION IN THE HYR1/IFF FAMILY</scope>
</reference>
<reference key="13">
    <citation type="journal article" date="2007" name="J. Immunol.">
        <title>Identification of pH-regulated antigen 1 released from Candida albicans as the major ligand for leukocyte integrin alphaMbeta2.</title>
        <authorList>
            <person name="Soloviev D.A."/>
            <person name="Fonzi W.A."/>
            <person name="Sentandreu R."/>
            <person name="Pluskota E."/>
            <person name="Forsyth C.B."/>
            <person name="Yadav S."/>
            <person name="Plow E.F."/>
        </authorList>
    </citation>
    <scope>IDENTIFICATION BY MASS SPECTROMETRY</scope>
    <scope>SUBCELLULAR LOCATION</scope>
    <scope>IDENTIFICATION IN A COMPLEX WITH MP65 AND PRA1</scope>
</reference>
<reference key="14">
    <citation type="journal article" date="2010" name="J. Infect. Dis.">
        <title>Candida albicans Hyr1p confers resistance to neutrophil killing and is a potential vaccine target.</title>
        <authorList>
            <person name="Luo G."/>
            <person name="Ibrahim A.S."/>
            <person name="Spellberg B."/>
            <person name="Nobile C.J."/>
            <person name="Mitchell A.P."/>
            <person name="Fu Y."/>
        </authorList>
    </citation>
    <scope>FUNCTION</scope>
    <scope>INDUCTION</scope>
</reference>
<reference key="15">
    <citation type="journal article" date="2011" name="J. Biol. Chem.">
        <title>Cap2-HAP complex is a critical transcriptional regulator that has dual but contrasting roles in regulation of iron homeostasis in Candida albicans.</title>
        <authorList>
            <person name="Singh R.P."/>
            <person name="Prasad H.K."/>
            <person name="Sinha I."/>
            <person name="Agarwal N."/>
            <person name="Natarajan K."/>
        </authorList>
    </citation>
    <scope>INDUCTION</scope>
</reference>
<reference key="16">
    <citation type="journal article" date="2011" name="Peptides">
        <title>Molecular determinants of the interaction between human high molecular weight kininogen and Candida albicans cell wall: Identification of kininogen-binding proteins on fungal cell wall and mapping the cell wall-binding regions on kininogen molecule.</title>
        <authorList>
            <person name="Karkowska-Kuleta J."/>
            <person name="Kedracka-Krok S."/>
            <person name="Rapala-Kozik M."/>
            <person name="Kamysz W."/>
            <person name="Bielinska S."/>
            <person name="Karafova A."/>
            <person name="Kozik A."/>
        </authorList>
    </citation>
    <scope>IDENTIFICATION BY MASS SPECTROMETRY</scope>
    <scope>SUBCELLULAR LOCATION</scope>
    <scope>KININOGEN-BINDING</scope>
</reference>
<reference key="17">
    <citation type="journal article" date="2011" name="PLoS ONE">
        <title>Role of Bcr1-activated genes Hwp1 and Hyr1 in Candida albicans oral mucosal biofilms and neutrophil evasion.</title>
        <authorList>
            <person name="Dwivedi P."/>
            <person name="Thompson A."/>
            <person name="Xie Z."/>
            <person name="Kashleva H."/>
            <person name="Ganguly S."/>
            <person name="Mitchell A.P."/>
            <person name="Dongari-Bagtzoglou A."/>
        </authorList>
    </citation>
    <scope>FUNCTION</scope>
    <scope>DISRUPTION PHENOTYPE</scope>
</reference>
<reference key="18">
    <citation type="journal article" date="2011" name="PLoS ONE">
        <title>Active and passive immunization with rHyr1p-N protects mice against hematogenously disseminated candidiasis.</title>
        <authorList>
            <person name="Luo G."/>
            <person name="Ibrahim A.S."/>
            <person name="French S.W."/>
            <person name="Edwards J.E. Jr."/>
            <person name="Fu Y."/>
        </authorList>
    </citation>
    <scope>FUNCTION IN VIRULENCE</scope>
</reference>
<reference key="19">
    <citation type="journal article" date="2012" name="PLoS ONE">
        <title>Purpurin suppresses Candida albicans biofilm formation and hyphal development.</title>
        <authorList>
            <person name="Tsang P.W."/>
            <person name="Bandara H.M."/>
            <person name="Fong W.P."/>
        </authorList>
    </citation>
    <scope>INDUCTION</scope>
</reference>
<name>HYR1_CANAL</name>
<feature type="signal peptide" evidence="1">
    <location>
        <begin position="1"/>
        <end position="20"/>
    </location>
</feature>
<feature type="chain" id="PRO_0000424752" description="Hyphally regulated cell wall protein 1">
    <location>
        <begin position="21"/>
        <end position="895"/>
    </location>
</feature>
<feature type="propeptide" id="PRO_0000424753" description="Removed in mature form" evidence="1">
    <location>
        <begin position="896"/>
        <end position="919"/>
    </location>
</feature>
<feature type="region of interest" description="Disordered" evidence="3">
    <location>
        <begin position="332"/>
        <end position="483"/>
    </location>
</feature>
<feature type="region of interest" description="Disordered" evidence="3">
    <location>
        <begin position="567"/>
        <end position="839"/>
    </location>
</feature>
<feature type="compositionally biased region" description="Low complexity" evidence="3">
    <location>
        <begin position="344"/>
        <end position="392"/>
    </location>
</feature>
<feature type="compositionally biased region" description="Polar residues" evidence="3">
    <location>
        <begin position="393"/>
        <end position="414"/>
    </location>
</feature>
<feature type="compositionally biased region" description="Low complexity" evidence="3">
    <location>
        <begin position="415"/>
        <end position="475"/>
    </location>
</feature>
<feature type="compositionally biased region" description="Low complexity" evidence="3">
    <location>
        <begin position="567"/>
        <end position="590"/>
    </location>
</feature>
<feature type="compositionally biased region" description="Gly residues" evidence="3">
    <location>
        <begin position="607"/>
        <end position="665"/>
    </location>
</feature>
<feature type="compositionally biased region" description="Gly residues" evidence="3">
    <location>
        <begin position="675"/>
        <end position="707"/>
    </location>
</feature>
<feature type="compositionally biased region" description="Low complexity" evidence="3">
    <location>
        <begin position="708"/>
        <end position="724"/>
    </location>
</feature>
<feature type="compositionally biased region" description="Gly residues" evidence="3">
    <location>
        <begin position="725"/>
        <end position="783"/>
    </location>
</feature>
<feature type="compositionally biased region" description="Low complexity" evidence="3">
    <location>
        <begin position="784"/>
        <end position="798"/>
    </location>
</feature>
<feature type="compositionally biased region" description="Basic and acidic residues" evidence="3">
    <location>
        <begin position="799"/>
        <end position="811"/>
    </location>
</feature>
<feature type="compositionally biased region" description="Polar residues" evidence="3">
    <location>
        <begin position="823"/>
        <end position="833"/>
    </location>
</feature>
<feature type="lipid moiety-binding region" description="GPI-anchor amidated asparagine" evidence="1">
    <location>
        <position position="895"/>
    </location>
</feature>
<feature type="glycosylation site" description="N-linked (GlcNAc...) asparagine" evidence="2">
    <location>
        <position position="236"/>
    </location>
</feature>
<feature type="glycosylation site" description="N-linked (GlcNAc...) asparagine" evidence="2">
    <location>
        <position position="449"/>
    </location>
</feature>
<feature type="glycosylation site" description="N-linked (GlcNAc...) asparagine" evidence="2">
    <location>
        <position position="488"/>
    </location>
</feature>
<feature type="glycosylation site" description="N-linked (GlcNAc...) asparagine" evidence="2">
    <location>
        <position position="580"/>
    </location>
</feature>
<feature type="glycosylation site" description="N-linked (GlcNAc...) asparagine" evidence="2">
    <location>
        <position position="585"/>
    </location>
</feature>
<feature type="glycosylation site" description="N-linked (GlcNAc...) asparagine" evidence="2">
    <location>
        <position position="607"/>
    </location>
</feature>
<feature type="glycosylation site" description="N-linked (GlcNAc...) asparagine" evidence="2">
    <location>
        <position position="619"/>
    </location>
</feature>
<feature type="glycosylation site" description="N-linked (GlcNAc...) asparagine" evidence="2">
    <location>
        <position position="631"/>
    </location>
</feature>
<feature type="glycosylation site" description="N-linked (GlcNAc...) asparagine" evidence="2">
    <location>
        <position position="639"/>
    </location>
</feature>
<feature type="glycosylation site" description="N-linked (GlcNAc...) asparagine" evidence="2">
    <location>
        <position position="647"/>
    </location>
</feature>
<feature type="glycosylation site" description="N-linked (GlcNAc...) asparagine" evidence="2">
    <location>
        <position position="693"/>
    </location>
</feature>
<feature type="glycosylation site" description="N-linked (GlcNAc...) asparagine" evidence="2">
    <location>
        <position position="729"/>
    </location>
</feature>
<feature type="glycosylation site" description="N-linked (GlcNAc...) asparagine" evidence="2">
    <location>
        <position position="741"/>
    </location>
</feature>
<feature type="glycosylation site" description="N-linked (GlcNAc...) asparagine" evidence="2">
    <location>
        <position position="755"/>
    </location>
</feature>
<feature type="glycosylation site" description="N-linked (GlcNAc...) asparagine" evidence="2">
    <location>
        <position position="879"/>
    </location>
</feature>
<feature type="glycosylation site" description="N-linked (GlcNAc...) asparagine" evidence="2">
    <location>
        <position position="895"/>
    </location>
</feature>
<accession>Q5AL03</accession>
<accession>A0A1D8PFM8</accession>
<accession>Q5ALC8</accession>
<keyword id="KW-0134">Cell wall</keyword>
<keyword id="KW-0325">Glycoprotein</keyword>
<keyword id="KW-0336">GPI-anchor</keyword>
<keyword id="KW-0449">Lipoprotein</keyword>
<keyword id="KW-0472">Membrane</keyword>
<keyword id="KW-1185">Reference proteome</keyword>
<keyword id="KW-0964">Secreted</keyword>
<keyword id="KW-0732">Signal</keyword>
<keyword id="KW-0843">Virulence</keyword>
<sequence length="919" mass="91917">MKVVSNFIFTILLTLNLSAALEVVTSRIDRGGIQGFHGDVKVHSGATWAILGTTLCSFFGGLEVEKGASLFIKSDNGPVLALNVALSTLVRPVINNGVISLNSKSSTSFSNFDIGGSSFTNNGEIYLASSGLVKSTAYLYAREWTNNGLIVAYQNQKAAGNIAFGTAYQTITNNGQICLRHQDFVPATKIKGTGCVTADEDTWIKLGNTILSVEPTHNFYLKDSKSSLIVHAVSSNQTFTVHGFGNGNKLGLTLPLTGNRDHFRFEYYPDTGILQLRAAALPQYFKIGKGYDSKLFRIVNSRGLKNAVTYDGPVPNNEIPAVCLIPCTNGPSAPESESDLNTPTTSSIETSSYSSAATESSVVSESSSAVDSLTSSSLSSKSESSDVVSSTTNIESSSTAIETTMNSESSTDAGSSSISQSESSSTAITSSSETSSSESMSASSTTASNTSIETDSGIVSQSESSSNALSSTEQSITSSPGQSTIYVNSTVTSTITSCDENKCTEDVVTIFTTVPCSTDCVPTTGDIPMSTSYTQRTVTSTITNCDEVSCSQDVVTYTTNVPHTTVDATTTTTTSTGGDNSTGGNESGSNHGSGAGSNEGSQSGPNNGSGSGSEGGSNNGSGSGSDSGSNNGSGSGSNNGSGSGSNNGSGSGSGSTEGSEGGSGSNEGSNHGSNEGSGSGSGSQTGSGSGSNNGSGSGSQSGSGSGSQSGSESGSNSGSNEGSNPGAGNGSNEGSGQGSGNGSEAGSGQGSGPNNGSGSGHNDGSGSGSNQGSNPGAGSGSGSESGSNAGSHSGSNEGAKTDSIEGFHTESKPGFNTGAHTDATVTGNSVANPVTTSTESDTTISVTVSITSYMTGFDGKPKPFTTVDVIPVPHSMPSNTTDSSSSVPTIDTNENGSSIVTGGKSILFGLIVSMVVLFM</sequence>
<gene>
    <name type="primary">HYR1</name>
    <name type="synonym">GPX1</name>
    <name type="ordered locus">CAALFM_C113450WA</name>
    <name type="ORF">CaO19.12440</name>
    <name type="ORF">CaO19.4975</name>
</gene>
<protein>
    <recommendedName>
        <fullName>Hyphally regulated cell wall protein 1</fullName>
    </recommendedName>
    <alternativeName>
        <fullName>Adhesin-like protein HYR1</fullName>
    </alternativeName>
</protein>
<dbReference type="EMBL" id="CP017623">
    <property type="protein sequence ID" value="AOW26950.1"/>
    <property type="molecule type" value="Genomic_DNA"/>
</dbReference>
<dbReference type="RefSeq" id="XP_722183.2">
    <property type="nucleotide sequence ID" value="XM_717090.2"/>
</dbReference>
<dbReference type="BioGRID" id="1219162">
    <property type="interactions" value="11"/>
</dbReference>
<dbReference type="STRING" id="237561.Q5AL03"/>
<dbReference type="GlyCosmos" id="Q5AL03">
    <property type="glycosylation" value="16 sites, No reported glycans"/>
</dbReference>
<dbReference type="EnsemblFungi" id="C1_13450W_A-T">
    <property type="protein sequence ID" value="C1_13450W_A-T-p1"/>
    <property type="gene ID" value="C1_13450W_A"/>
</dbReference>
<dbReference type="GeneID" id="3636226"/>
<dbReference type="KEGG" id="cal:CAALFM_C113450WA"/>
<dbReference type="CGD" id="CAL0000199501">
    <property type="gene designation" value="HYR1"/>
</dbReference>
<dbReference type="VEuPathDB" id="FungiDB:C1_13450W_A"/>
<dbReference type="HOGENOM" id="CLU_006199_0_0_1"/>
<dbReference type="InParanoid" id="Q5AL03"/>
<dbReference type="OrthoDB" id="4022214at2759"/>
<dbReference type="PHI-base" id="PHI:10194"/>
<dbReference type="PHI-base" id="PHI:11391"/>
<dbReference type="PRO" id="PR:Q5AL03"/>
<dbReference type="Proteomes" id="UP000000559">
    <property type="component" value="Chromosome 1"/>
</dbReference>
<dbReference type="GO" id="GO:0009986">
    <property type="term" value="C:cell surface"/>
    <property type="evidence" value="ECO:0000314"/>
    <property type="project" value="CGD"/>
</dbReference>
<dbReference type="GO" id="GO:0005576">
    <property type="term" value="C:extracellular region"/>
    <property type="evidence" value="ECO:0000314"/>
    <property type="project" value="CGD"/>
</dbReference>
<dbReference type="GO" id="GO:0009277">
    <property type="term" value="C:fungal-type cell wall"/>
    <property type="evidence" value="ECO:0000314"/>
    <property type="project" value="CGD"/>
</dbReference>
<dbReference type="GO" id="GO:0030446">
    <property type="term" value="C:hyphal cell wall"/>
    <property type="evidence" value="ECO:0000314"/>
    <property type="project" value="CGD"/>
</dbReference>
<dbReference type="GO" id="GO:0098552">
    <property type="term" value="C:side of membrane"/>
    <property type="evidence" value="ECO:0007669"/>
    <property type="project" value="UniProtKB-KW"/>
</dbReference>
<dbReference type="GO" id="GO:0030985">
    <property type="term" value="F:high molecular weight kininogen binding"/>
    <property type="evidence" value="ECO:0000314"/>
    <property type="project" value="CGD"/>
</dbReference>
<dbReference type="GO" id="GO:0044407">
    <property type="term" value="P:single-species biofilm formation in or on host organism"/>
    <property type="evidence" value="ECO:0000315"/>
    <property type="project" value="CGD"/>
</dbReference>
<dbReference type="GO" id="GO:0044011">
    <property type="term" value="P:single-species biofilm formation on inanimate substrate"/>
    <property type="evidence" value="ECO:0000316"/>
    <property type="project" value="CGD"/>
</dbReference>
<dbReference type="GO" id="GO:0030682">
    <property type="term" value="P:symbiont-mediated perturbation of host defenses"/>
    <property type="evidence" value="ECO:0000315"/>
    <property type="project" value="CGD"/>
</dbReference>
<dbReference type="InterPro" id="IPR021031">
    <property type="entry name" value="Hyphal-reg_cell_wall_N"/>
</dbReference>
<dbReference type="PANTHER" id="PTHR40903">
    <property type="entry name" value="GLYCINE-RICH CELL WALL STRUCTURAL PROTEIN 1-LIKE"/>
    <property type="match status" value="1"/>
</dbReference>
<dbReference type="PANTHER" id="PTHR40903:SF1">
    <property type="entry name" value="HYPHALLY REGULATED CELL WALL PROTEIN 3"/>
    <property type="match status" value="1"/>
</dbReference>
<dbReference type="Pfam" id="PF11765">
    <property type="entry name" value="Hyphal_reg_CWP"/>
    <property type="match status" value="1"/>
</dbReference>